<keyword id="KW-0119">Carbohydrate metabolism</keyword>
<keyword id="KW-0238">DNA-binding</keyword>
<keyword id="KW-0678">Repressor</keyword>
<keyword id="KW-0804">Transcription</keyword>
<keyword id="KW-0805">Transcription regulation</keyword>
<reference key="1">
    <citation type="journal article" date="2008" name="DNA Res.">
        <title>Complete genome sequence and comparative analysis of the wild-type commensal Escherichia coli strain SE11 isolated from a healthy adult.</title>
        <authorList>
            <person name="Oshima K."/>
            <person name="Toh H."/>
            <person name="Ogura Y."/>
            <person name="Sasamoto H."/>
            <person name="Morita H."/>
            <person name="Park S.-H."/>
            <person name="Ooka T."/>
            <person name="Iyoda S."/>
            <person name="Taylor T.D."/>
            <person name="Hayashi T."/>
            <person name="Itoh K."/>
            <person name="Hattori M."/>
        </authorList>
    </citation>
    <scope>NUCLEOTIDE SEQUENCE [LARGE SCALE GENOMIC DNA]</scope>
    <source>
        <strain>SE11</strain>
    </source>
</reference>
<organism>
    <name type="scientific">Escherichia coli (strain SE11)</name>
    <dbReference type="NCBI Taxonomy" id="409438"/>
    <lineage>
        <taxon>Bacteria</taxon>
        <taxon>Pseudomonadati</taxon>
        <taxon>Pseudomonadota</taxon>
        <taxon>Gammaproteobacteria</taxon>
        <taxon>Enterobacterales</taxon>
        <taxon>Enterobacteriaceae</taxon>
        <taxon>Escherichia</taxon>
    </lineage>
</organism>
<gene>
    <name evidence="1" type="primary">murR</name>
    <name type="ordered locus">ECSE_2717</name>
</gene>
<feature type="chain" id="PRO_0000387759" description="HTH-type transcriptional regulator MurR">
    <location>
        <begin position="1"/>
        <end position="285"/>
    </location>
</feature>
<feature type="domain" description="HTH rpiR-type" evidence="1">
    <location>
        <begin position="1"/>
        <end position="77"/>
    </location>
</feature>
<feature type="domain" description="SIS" evidence="1">
    <location>
        <begin position="128"/>
        <end position="268"/>
    </location>
</feature>
<feature type="DNA-binding region" description="H-T-H motif" evidence="1">
    <location>
        <begin position="37"/>
        <end position="56"/>
    </location>
</feature>
<comment type="function">
    <text evidence="1">Represses the expression of the murPQ operon involved in the uptake and degradation of N-acetylmuramic acid (MurNAc). Binds to two adjacent inverted repeats within the operator region. MurNAc 6-phosphate, the substrate of MurQ, is the specific inducer that weakens binding of MurR to the operator.</text>
</comment>
<comment type="pathway">
    <text>Amino-sugar metabolism; N-acetylmuramate degradation [regulation].</text>
</comment>
<comment type="subunit">
    <text evidence="1">Homotetramer.</text>
</comment>
<protein>
    <recommendedName>
        <fullName evidence="1">HTH-type transcriptional regulator MurR</fullName>
    </recommendedName>
    <alternativeName>
        <fullName evidence="1">MurPQ operon repressor</fullName>
    </alternativeName>
</protein>
<name>MURR_ECOSE</name>
<sequence length="285" mass="31196">MLYLTKISNAGSEFTENEQKIADFLQANVSELQSVSSRQMAKQLGISQSSIVKFAQKLGAQGFTELRMALIGEYSASREKTNATALHLHSSITSDDSLEVIARKLNREKELALEQTCALFDYARLQKIIEVISKAPFIQITGLGGSALVGRDLSFKLMKIGYRVACEADTHVQATVSQALKKGDVQIAISYSGSKKEIVLCAEAARKQGATVIAITSLADSPLRRLAHFTLDTVSGETEWRSSSMSTRTAQNSVTDLLFVGLVQLNDVESLKMIQRSSELTQRLK</sequence>
<evidence type="ECO:0000255" key="1">
    <source>
        <dbReference type="HAMAP-Rule" id="MF_02108"/>
    </source>
</evidence>
<proteinExistence type="inferred from homology"/>
<accession>B6I503</accession>
<dbReference type="EMBL" id="AP009240">
    <property type="protein sequence ID" value="BAG78241.1"/>
    <property type="molecule type" value="Genomic_DNA"/>
</dbReference>
<dbReference type="RefSeq" id="WP_000966468.1">
    <property type="nucleotide sequence ID" value="NC_011415.1"/>
</dbReference>
<dbReference type="SMR" id="B6I503"/>
<dbReference type="KEGG" id="ecy:ECSE_2717"/>
<dbReference type="HOGENOM" id="CLU_055769_0_2_6"/>
<dbReference type="UniPathway" id="UPA00342"/>
<dbReference type="Proteomes" id="UP000008199">
    <property type="component" value="Chromosome"/>
</dbReference>
<dbReference type="GO" id="GO:0097367">
    <property type="term" value="F:carbohydrate derivative binding"/>
    <property type="evidence" value="ECO:0007669"/>
    <property type="project" value="InterPro"/>
</dbReference>
<dbReference type="GO" id="GO:0003677">
    <property type="term" value="F:DNA binding"/>
    <property type="evidence" value="ECO:0007669"/>
    <property type="project" value="UniProtKB-KW"/>
</dbReference>
<dbReference type="GO" id="GO:0003700">
    <property type="term" value="F:DNA-binding transcription factor activity"/>
    <property type="evidence" value="ECO:0007669"/>
    <property type="project" value="UniProtKB-UniRule"/>
</dbReference>
<dbReference type="GO" id="GO:1901135">
    <property type="term" value="P:carbohydrate derivative metabolic process"/>
    <property type="evidence" value="ECO:0007669"/>
    <property type="project" value="InterPro"/>
</dbReference>
<dbReference type="GO" id="GO:0097173">
    <property type="term" value="P:N-acetylmuramic acid catabolic process"/>
    <property type="evidence" value="ECO:0007669"/>
    <property type="project" value="UniProtKB-UniPathway"/>
</dbReference>
<dbReference type="GO" id="GO:0045892">
    <property type="term" value="P:negative regulation of DNA-templated transcription"/>
    <property type="evidence" value="ECO:0007669"/>
    <property type="project" value="UniProtKB-UniRule"/>
</dbReference>
<dbReference type="GO" id="GO:0043470">
    <property type="term" value="P:regulation of carbohydrate catabolic process"/>
    <property type="evidence" value="ECO:0007669"/>
    <property type="project" value="UniProtKB-UniRule"/>
</dbReference>
<dbReference type="CDD" id="cd05013">
    <property type="entry name" value="SIS_RpiR"/>
    <property type="match status" value="1"/>
</dbReference>
<dbReference type="FunFam" id="3.40.50.10490:FF:000028">
    <property type="entry name" value="HTH-type transcriptional regulator MurR"/>
    <property type="match status" value="1"/>
</dbReference>
<dbReference type="Gene3D" id="3.40.50.10490">
    <property type="entry name" value="Glucose-6-phosphate isomerase like protein, domain 1"/>
    <property type="match status" value="1"/>
</dbReference>
<dbReference type="Gene3D" id="1.10.10.10">
    <property type="entry name" value="Winged helix-like DNA-binding domain superfamily/Winged helix DNA-binding domain"/>
    <property type="match status" value="1"/>
</dbReference>
<dbReference type="HAMAP" id="MF_02108">
    <property type="entry name" value="HTH_type_MurR"/>
    <property type="match status" value="1"/>
</dbReference>
<dbReference type="InterPro" id="IPR009057">
    <property type="entry name" value="Homeodomain-like_sf"/>
</dbReference>
<dbReference type="InterPro" id="IPR000281">
    <property type="entry name" value="HTH_RpiR"/>
</dbReference>
<dbReference type="InterPro" id="IPR047640">
    <property type="entry name" value="RpiR-like"/>
</dbReference>
<dbReference type="InterPro" id="IPR035472">
    <property type="entry name" value="RpiR-like_SIS"/>
</dbReference>
<dbReference type="InterPro" id="IPR001347">
    <property type="entry name" value="SIS_dom"/>
</dbReference>
<dbReference type="InterPro" id="IPR046348">
    <property type="entry name" value="SIS_dom_sf"/>
</dbReference>
<dbReference type="InterPro" id="IPR022821">
    <property type="entry name" value="Tscrpt_reg_HTH_MurR"/>
</dbReference>
<dbReference type="InterPro" id="IPR036388">
    <property type="entry name" value="WH-like_DNA-bd_sf"/>
</dbReference>
<dbReference type="NCBIfam" id="NF012026">
    <property type="entry name" value="PRK15482.1"/>
    <property type="match status" value="1"/>
</dbReference>
<dbReference type="PANTHER" id="PTHR30514">
    <property type="entry name" value="GLUCOKINASE"/>
    <property type="match status" value="1"/>
</dbReference>
<dbReference type="PANTHER" id="PTHR30514:SF17">
    <property type="entry name" value="HTH-TYPE TRANSCRIPTIONAL REGULATOR MURR"/>
    <property type="match status" value="1"/>
</dbReference>
<dbReference type="Pfam" id="PF01418">
    <property type="entry name" value="HTH_6"/>
    <property type="match status" value="1"/>
</dbReference>
<dbReference type="Pfam" id="PF01380">
    <property type="entry name" value="SIS"/>
    <property type="match status" value="1"/>
</dbReference>
<dbReference type="SUPFAM" id="SSF46689">
    <property type="entry name" value="Homeodomain-like"/>
    <property type="match status" value="1"/>
</dbReference>
<dbReference type="SUPFAM" id="SSF53697">
    <property type="entry name" value="SIS domain"/>
    <property type="match status" value="1"/>
</dbReference>
<dbReference type="PROSITE" id="PS51071">
    <property type="entry name" value="HTH_RPIR"/>
    <property type="match status" value="1"/>
</dbReference>
<dbReference type="PROSITE" id="PS51464">
    <property type="entry name" value="SIS"/>
    <property type="match status" value="1"/>
</dbReference>